<dbReference type="EMBL" id="CP001071">
    <property type="protein sequence ID" value="ACD04146.1"/>
    <property type="molecule type" value="Genomic_DNA"/>
</dbReference>
<dbReference type="RefSeq" id="WP_012419361.1">
    <property type="nucleotide sequence ID" value="NC_010655.1"/>
</dbReference>
<dbReference type="SMR" id="B2UMU0"/>
<dbReference type="STRING" id="349741.Amuc_0304"/>
<dbReference type="PaxDb" id="349741-Amuc_0304"/>
<dbReference type="KEGG" id="amu:Amuc_0304"/>
<dbReference type="eggNOG" id="COG0087">
    <property type="taxonomic scope" value="Bacteria"/>
</dbReference>
<dbReference type="HOGENOM" id="CLU_044142_4_1_0"/>
<dbReference type="OrthoDB" id="9806135at2"/>
<dbReference type="BioCyc" id="AMUC349741:G1GBX-346-MONOMER"/>
<dbReference type="Proteomes" id="UP000001031">
    <property type="component" value="Chromosome"/>
</dbReference>
<dbReference type="GO" id="GO:0022625">
    <property type="term" value="C:cytosolic large ribosomal subunit"/>
    <property type="evidence" value="ECO:0007669"/>
    <property type="project" value="TreeGrafter"/>
</dbReference>
<dbReference type="GO" id="GO:0019843">
    <property type="term" value="F:rRNA binding"/>
    <property type="evidence" value="ECO:0007669"/>
    <property type="project" value="UniProtKB-UniRule"/>
</dbReference>
<dbReference type="GO" id="GO:0003735">
    <property type="term" value="F:structural constituent of ribosome"/>
    <property type="evidence" value="ECO:0007669"/>
    <property type="project" value="InterPro"/>
</dbReference>
<dbReference type="GO" id="GO:0006412">
    <property type="term" value="P:translation"/>
    <property type="evidence" value="ECO:0007669"/>
    <property type="project" value="UniProtKB-UniRule"/>
</dbReference>
<dbReference type="FunFam" id="2.40.30.10:FF:000004">
    <property type="entry name" value="50S ribosomal protein L3"/>
    <property type="match status" value="1"/>
</dbReference>
<dbReference type="FunFam" id="3.30.160.810:FF:000001">
    <property type="entry name" value="50S ribosomal protein L3"/>
    <property type="match status" value="1"/>
</dbReference>
<dbReference type="Gene3D" id="3.30.160.810">
    <property type="match status" value="1"/>
</dbReference>
<dbReference type="Gene3D" id="2.40.30.10">
    <property type="entry name" value="Translation factors"/>
    <property type="match status" value="1"/>
</dbReference>
<dbReference type="HAMAP" id="MF_01325_B">
    <property type="entry name" value="Ribosomal_uL3_B"/>
    <property type="match status" value="1"/>
</dbReference>
<dbReference type="InterPro" id="IPR000597">
    <property type="entry name" value="Ribosomal_uL3"/>
</dbReference>
<dbReference type="InterPro" id="IPR019927">
    <property type="entry name" value="Ribosomal_uL3_bac/org-type"/>
</dbReference>
<dbReference type="InterPro" id="IPR019926">
    <property type="entry name" value="Ribosomal_uL3_CS"/>
</dbReference>
<dbReference type="InterPro" id="IPR009000">
    <property type="entry name" value="Transl_B-barrel_sf"/>
</dbReference>
<dbReference type="NCBIfam" id="TIGR03625">
    <property type="entry name" value="L3_bact"/>
    <property type="match status" value="1"/>
</dbReference>
<dbReference type="PANTHER" id="PTHR11229">
    <property type="entry name" value="50S RIBOSOMAL PROTEIN L3"/>
    <property type="match status" value="1"/>
</dbReference>
<dbReference type="PANTHER" id="PTHR11229:SF16">
    <property type="entry name" value="LARGE RIBOSOMAL SUBUNIT PROTEIN UL3C"/>
    <property type="match status" value="1"/>
</dbReference>
<dbReference type="Pfam" id="PF00297">
    <property type="entry name" value="Ribosomal_L3"/>
    <property type="match status" value="1"/>
</dbReference>
<dbReference type="SUPFAM" id="SSF50447">
    <property type="entry name" value="Translation proteins"/>
    <property type="match status" value="1"/>
</dbReference>
<dbReference type="PROSITE" id="PS00474">
    <property type="entry name" value="RIBOSOMAL_L3"/>
    <property type="match status" value="1"/>
</dbReference>
<name>RL3_AKKM8</name>
<organism>
    <name type="scientific">Akkermansia muciniphila (strain ATCC BAA-835 / DSM 22959 / JCM 33894 / BCRC 81048 / CCUG 64013 / CIP 107961 / Muc)</name>
    <dbReference type="NCBI Taxonomy" id="349741"/>
    <lineage>
        <taxon>Bacteria</taxon>
        <taxon>Pseudomonadati</taxon>
        <taxon>Verrucomicrobiota</taxon>
        <taxon>Verrucomicrobiia</taxon>
        <taxon>Verrucomicrobiales</taxon>
        <taxon>Akkermansiaceae</taxon>
        <taxon>Akkermansia</taxon>
    </lineage>
</organism>
<reference key="1">
    <citation type="journal article" date="2011" name="PLoS ONE">
        <title>The genome of Akkermansia muciniphila, a dedicated intestinal mucin degrader, and its use in exploring intestinal metagenomes.</title>
        <authorList>
            <person name="van Passel M.W."/>
            <person name="Kant R."/>
            <person name="Zoetendal E.G."/>
            <person name="Plugge C.M."/>
            <person name="Derrien M."/>
            <person name="Malfatti S.A."/>
            <person name="Chain P.S."/>
            <person name="Woyke T."/>
            <person name="Palva A."/>
            <person name="de Vos W.M."/>
            <person name="Smidt H."/>
        </authorList>
    </citation>
    <scope>NUCLEOTIDE SEQUENCE [LARGE SCALE GENOMIC DNA]</scope>
    <source>
        <strain>ATCC BAA-835 / DSM 22959 / JCM 33894 / BCRC 81048 / CCUG 64013 / CIP 107961 / Muc</strain>
    </source>
</reference>
<proteinExistence type="inferred from homology"/>
<keyword id="KW-1185">Reference proteome</keyword>
<keyword id="KW-0687">Ribonucleoprotein</keyword>
<keyword id="KW-0689">Ribosomal protein</keyword>
<keyword id="KW-0694">RNA-binding</keyword>
<keyword id="KW-0699">rRNA-binding</keyword>
<gene>
    <name evidence="1" type="primary">rplC</name>
    <name type="ordered locus">Amuc_0304</name>
</gene>
<protein>
    <recommendedName>
        <fullName evidence="1">Large ribosomal subunit protein uL3</fullName>
    </recommendedName>
    <alternativeName>
        <fullName evidence="2">50S ribosomal protein L3</fullName>
    </alternativeName>
</protein>
<feature type="chain" id="PRO_1000141816" description="Large ribosomal subunit protein uL3">
    <location>
        <begin position="1"/>
        <end position="211"/>
    </location>
</feature>
<accession>B2UMU0</accession>
<evidence type="ECO:0000255" key="1">
    <source>
        <dbReference type="HAMAP-Rule" id="MF_01325"/>
    </source>
</evidence>
<evidence type="ECO:0000305" key="2"/>
<comment type="function">
    <text evidence="1">One of the primary rRNA binding proteins, it binds directly near the 3'-end of the 23S rRNA, where it nucleates assembly of the 50S subunit.</text>
</comment>
<comment type="subunit">
    <text evidence="1">Part of the 50S ribosomal subunit. Forms a cluster with proteins L14 and L19.</text>
</comment>
<comment type="similarity">
    <text evidence="1">Belongs to the universal ribosomal protein uL3 family.</text>
</comment>
<sequence length="211" mass="22632">MALGLIGKKVGMTRLFDQESGAMVPVTVIDVKGNTFAQIKTEDKDGYNAIQVAFDAQKESRVAKPQAGHFKKLGIQPTKLLKEFRVEASELPAEGAKDPGVDLFSAGQWVDVIGTSKGKGFQGAMRRHNFHGSPAAHGSMMHRRTGGVGGCSTPGRVWKNQKMPGQMGNAKRTVQNLKVVAVRPEDNVILISGAVPGARGSYLVIRPAKKK</sequence>